<protein>
    <recommendedName>
        <fullName evidence="1">ATP synthase subunit beta</fullName>
        <ecNumber evidence="1">7.1.2.2</ecNumber>
    </recommendedName>
    <alternativeName>
        <fullName evidence="1">ATP synthase F1 sector subunit beta</fullName>
    </alternativeName>
    <alternativeName>
        <fullName evidence="1">F-ATPase subunit beta</fullName>
    </alternativeName>
</protein>
<gene>
    <name evidence="1" type="primary">atpD</name>
    <name type="ordered locus">SPN23F14720</name>
</gene>
<feature type="chain" id="PRO_1000166606" description="ATP synthase subunit beta">
    <location>
        <begin position="1"/>
        <end position="468"/>
    </location>
</feature>
<feature type="binding site" evidence="1">
    <location>
        <begin position="155"/>
        <end position="162"/>
    </location>
    <ligand>
        <name>ATP</name>
        <dbReference type="ChEBI" id="CHEBI:30616"/>
    </ligand>
</feature>
<keyword id="KW-0066">ATP synthesis</keyword>
<keyword id="KW-0067">ATP-binding</keyword>
<keyword id="KW-1003">Cell membrane</keyword>
<keyword id="KW-0139">CF(1)</keyword>
<keyword id="KW-0375">Hydrogen ion transport</keyword>
<keyword id="KW-0406">Ion transport</keyword>
<keyword id="KW-0472">Membrane</keyword>
<keyword id="KW-0547">Nucleotide-binding</keyword>
<keyword id="KW-1278">Translocase</keyword>
<keyword id="KW-0813">Transport</keyword>
<comment type="function">
    <text evidence="1">Produces ATP from ADP in the presence of a proton gradient across the membrane. The catalytic sites are hosted primarily by the beta subunits.</text>
</comment>
<comment type="catalytic activity">
    <reaction evidence="1">
        <text>ATP + H2O + 4 H(+)(in) = ADP + phosphate + 5 H(+)(out)</text>
        <dbReference type="Rhea" id="RHEA:57720"/>
        <dbReference type="ChEBI" id="CHEBI:15377"/>
        <dbReference type="ChEBI" id="CHEBI:15378"/>
        <dbReference type="ChEBI" id="CHEBI:30616"/>
        <dbReference type="ChEBI" id="CHEBI:43474"/>
        <dbReference type="ChEBI" id="CHEBI:456216"/>
        <dbReference type="EC" id="7.1.2.2"/>
    </reaction>
</comment>
<comment type="subunit">
    <text evidence="1">F-type ATPases have 2 components, CF(1) - the catalytic core - and CF(0) - the membrane proton channel. CF(1) has five subunits: alpha(3), beta(3), gamma(1), delta(1), epsilon(1). CF(0) has three main subunits: a(1), b(2) and c(9-12). The alpha and beta chains form an alternating ring which encloses part of the gamma chain. CF(1) is attached to CF(0) by a central stalk formed by the gamma and epsilon chains, while a peripheral stalk is formed by the delta and b chains.</text>
</comment>
<comment type="subcellular location">
    <subcellularLocation>
        <location evidence="1">Cell membrane</location>
        <topology evidence="1">Peripheral membrane protein</topology>
    </subcellularLocation>
</comment>
<comment type="similarity">
    <text evidence="1">Belongs to the ATPase alpha/beta chains family.</text>
</comment>
<organism>
    <name type="scientific">Streptococcus pneumoniae (strain ATCC 700669 / Spain 23F-1)</name>
    <dbReference type="NCBI Taxonomy" id="561276"/>
    <lineage>
        <taxon>Bacteria</taxon>
        <taxon>Bacillati</taxon>
        <taxon>Bacillota</taxon>
        <taxon>Bacilli</taxon>
        <taxon>Lactobacillales</taxon>
        <taxon>Streptococcaceae</taxon>
        <taxon>Streptococcus</taxon>
    </lineage>
</organism>
<sequence length="468" mass="50904">MSSGKIAQVIGPVVDVLFAAGEKLPEINNALVVYKNDERKTKIVLEVALELGDGMVRTIAMESTDGLTRGMEVLDTGRPISVPVGKETLGRVFNVLGDTIDLEAPFTEDAERQPIHKKAPTFDELSTSSEILETGIKVIDLLAPYLKGGKVGLFGGAGVGKTVLIQELIHNIAQEHGGISVFAGVGERTREGNDLYWEMKESGVIEKTAMVFGQMNEPPGARMRVALTGLTIAEYFRDVEGQDVLLFIDNIFRFTQAGSEVSALLGRMPSAVGYQPTLATEMGQLQERITSTKKGSVTSIQAIYVPADDYTDPAPATAFAHLDSTTNLERKLVQLGIYPAVDPLASSSRALAPEIVGEEHYAVAAEVKRVLQRYHELQDIIAILGMDELSDEEKTLVARARRIQFFLSQNFNVAEQFTGQPGSYVPVAETVRGFKEILDGKYDHLPEDAFRGVGSIEDVIAKAEKMGF</sequence>
<name>ATPB_STRPJ</name>
<reference key="1">
    <citation type="journal article" date="2009" name="J. Bacteriol.">
        <title>Role of conjugative elements in the evolution of the multidrug-resistant pandemic clone Streptococcus pneumoniae Spain23F ST81.</title>
        <authorList>
            <person name="Croucher N.J."/>
            <person name="Walker D."/>
            <person name="Romero P."/>
            <person name="Lennard N."/>
            <person name="Paterson G.K."/>
            <person name="Bason N.C."/>
            <person name="Mitchell A.M."/>
            <person name="Quail M.A."/>
            <person name="Andrew P.W."/>
            <person name="Parkhill J."/>
            <person name="Bentley S.D."/>
            <person name="Mitchell T.J."/>
        </authorList>
    </citation>
    <scope>NUCLEOTIDE SEQUENCE [LARGE SCALE GENOMIC DNA]</scope>
    <source>
        <strain>ATCC 700669 / Spain 23F-1</strain>
    </source>
</reference>
<evidence type="ECO:0000255" key="1">
    <source>
        <dbReference type="HAMAP-Rule" id="MF_01347"/>
    </source>
</evidence>
<accession>B8ZLA9</accession>
<proteinExistence type="inferred from homology"/>
<dbReference type="EC" id="7.1.2.2" evidence="1"/>
<dbReference type="EMBL" id="FM211187">
    <property type="protein sequence ID" value="CAR69254.1"/>
    <property type="molecule type" value="Genomic_DNA"/>
</dbReference>
<dbReference type="RefSeq" id="WP_000094354.1">
    <property type="nucleotide sequence ID" value="NC_011900.1"/>
</dbReference>
<dbReference type="SMR" id="B8ZLA9"/>
<dbReference type="KEGG" id="sne:SPN23F14720"/>
<dbReference type="HOGENOM" id="CLU_022398_0_2_9"/>
<dbReference type="GO" id="GO:0005886">
    <property type="term" value="C:plasma membrane"/>
    <property type="evidence" value="ECO:0007669"/>
    <property type="project" value="UniProtKB-SubCell"/>
</dbReference>
<dbReference type="GO" id="GO:0045259">
    <property type="term" value="C:proton-transporting ATP synthase complex"/>
    <property type="evidence" value="ECO:0007669"/>
    <property type="project" value="UniProtKB-KW"/>
</dbReference>
<dbReference type="GO" id="GO:0005524">
    <property type="term" value="F:ATP binding"/>
    <property type="evidence" value="ECO:0007669"/>
    <property type="project" value="UniProtKB-UniRule"/>
</dbReference>
<dbReference type="GO" id="GO:0016887">
    <property type="term" value="F:ATP hydrolysis activity"/>
    <property type="evidence" value="ECO:0007669"/>
    <property type="project" value="InterPro"/>
</dbReference>
<dbReference type="GO" id="GO:0046933">
    <property type="term" value="F:proton-transporting ATP synthase activity, rotational mechanism"/>
    <property type="evidence" value="ECO:0007669"/>
    <property type="project" value="UniProtKB-UniRule"/>
</dbReference>
<dbReference type="CDD" id="cd18110">
    <property type="entry name" value="ATP-synt_F1_beta_C"/>
    <property type="match status" value="1"/>
</dbReference>
<dbReference type="CDD" id="cd18115">
    <property type="entry name" value="ATP-synt_F1_beta_N"/>
    <property type="match status" value="1"/>
</dbReference>
<dbReference type="CDD" id="cd01133">
    <property type="entry name" value="F1-ATPase_beta_CD"/>
    <property type="match status" value="1"/>
</dbReference>
<dbReference type="FunFam" id="1.10.1140.10:FF:000001">
    <property type="entry name" value="ATP synthase subunit beta"/>
    <property type="match status" value="1"/>
</dbReference>
<dbReference type="FunFam" id="2.40.10.170:FF:000005">
    <property type="entry name" value="ATP synthase subunit beta"/>
    <property type="match status" value="1"/>
</dbReference>
<dbReference type="FunFam" id="3.40.50.300:FF:000004">
    <property type="entry name" value="ATP synthase subunit beta"/>
    <property type="match status" value="1"/>
</dbReference>
<dbReference type="Gene3D" id="2.40.10.170">
    <property type="match status" value="1"/>
</dbReference>
<dbReference type="Gene3D" id="1.10.1140.10">
    <property type="entry name" value="Bovine Mitochondrial F1-atpase, Atp Synthase Beta Chain, Chain D, domain 3"/>
    <property type="match status" value="1"/>
</dbReference>
<dbReference type="Gene3D" id="3.40.50.300">
    <property type="entry name" value="P-loop containing nucleotide triphosphate hydrolases"/>
    <property type="match status" value="1"/>
</dbReference>
<dbReference type="HAMAP" id="MF_01347">
    <property type="entry name" value="ATP_synth_beta_bact"/>
    <property type="match status" value="1"/>
</dbReference>
<dbReference type="InterPro" id="IPR003593">
    <property type="entry name" value="AAA+_ATPase"/>
</dbReference>
<dbReference type="InterPro" id="IPR055190">
    <property type="entry name" value="ATP-synt_VA_C"/>
</dbReference>
<dbReference type="InterPro" id="IPR005722">
    <property type="entry name" value="ATP_synth_F1_bsu"/>
</dbReference>
<dbReference type="InterPro" id="IPR020003">
    <property type="entry name" value="ATPase_a/bsu_AS"/>
</dbReference>
<dbReference type="InterPro" id="IPR050053">
    <property type="entry name" value="ATPase_alpha/beta_chains"/>
</dbReference>
<dbReference type="InterPro" id="IPR004100">
    <property type="entry name" value="ATPase_F1/V1/A1_a/bsu_N"/>
</dbReference>
<dbReference type="InterPro" id="IPR036121">
    <property type="entry name" value="ATPase_F1/V1/A1_a/bsu_N_sf"/>
</dbReference>
<dbReference type="InterPro" id="IPR000194">
    <property type="entry name" value="ATPase_F1/V1/A1_a/bsu_nucl-bd"/>
</dbReference>
<dbReference type="InterPro" id="IPR024034">
    <property type="entry name" value="ATPase_F1/V1_b/a_C"/>
</dbReference>
<dbReference type="InterPro" id="IPR027417">
    <property type="entry name" value="P-loop_NTPase"/>
</dbReference>
<dbReference type="NCBIfam" id="TIGR01039">
    <property type="entry name" value="atpD"/>
    <property type="match status" value="1"/>
</dbReference>
<dbReference type="PANTHER" id="PTHR15184">
    <property type="entry name" value="ATP SYNTHASE"/>
    <property type="match status" value="1"/>
</dbReference>
<dbReference type="PANTHER" id="PTHR15184:SF71">
    <property type="entry name" value="ATP SYNTHASE SUBUNIT BETA, MITOCHONDRIAL"/>
    <property type="match status" value="1"/>
</dbReference>
<dbReference type="Pfam" id="PF00006">
    <property type="entry name" value="ATP-synt_ab"/>
    <property type="match status" value="1"/>
</dbReference>
<dbReference type="Pfam" id="PF02874">
    <property type="entry name" value="ATP-synt_ab_N"/>
    <property type="match status" value="1"/>
</dbReference>
<dbReference type="Pfam" id="PF22919">
    <property type="entry name" value="ATP-synt_VA_C"/>
    <property type="match status" value="1"/>
</dbReference>
<dbReference type="SMART" id="SM00382">
    <property type="entry name" value="AAA"/>
    <property type="match status" value="1"/>
</dbReference>
<dbReference type="SUPFAM" id="SSF47917">
    <property type="entry name" value="C-terminal domain of alpha and beta subunits of F1 ATP synthase"/>
    <property type="match status" value="1"/>
</dbReference>
<dbReference type="SUPFAM" id="SSF50615">
    <property type="entry name" value="N-terminal domain of alpha and beta subunits of F1 ATP synthase"/>
    <property type="match status" value="1"/>
</dbReference>
<dbReference type="SUPFAM" id="SSF52540">
    <property type="entry name" value="P-loop containing nucleoside triphosphate hydrolases"/>
    <property type="match status" value="1"/>
</dbReference>
<dbReference type="PROSITE" id="PS00152">
    <property type="entry name" value="ATPASE_ALPHA_BETA"/>
    <property type="match status" value="1"/>
</dbReference>